<organism>
    <name type="scientific">Nitrosomonas europaea (strain ATCC 19718 / CIP 103999 / KCTC 2705 / NBRC 14298)</name>
    <dbReference type="NCBI Taxonomy" id="228410"/>
    <lineage>
        <taxon>Bacteria</taxon>
        <taxon>Pseudomonadati</taxon>
        <taxon>Pseudomonadota</taxon>
        <taxon>Betaproteobacteria</taxon>
        <taxon>Nitrosomonadales</taxon>
        <taxon>Nitrosomonadaceae</taxon>
        <taxon>Nitrosomonas</taxon>
    </lineage>
</organism>
<proteinExistence type="inferred from homology"/>
<sequence length="863" mass="94836">MKSSEIRQKFLEFFEARGHVIVPSSPLVPGNDPTLLFTNAGMVQFKDVFLGQDKRPYVRAVSSQRCVRAGGKHNDLENVGYTARHHTFFEMLGNFSFGDYFKRKAILFAWEFLTGSLGIPREKLWATVYAEDDEAADIWLNEVGIDPSRLVRIATSDNFWQMGDTGPCGPCSEIFYDHGPAVAGGPPGSENAEGDRYIEIWNLVFMQYNRDASGELHPLPKPSVDTGMGLERIAAVMQQVHSNYEIDLFRSLIEAAARVTGSKDLSNNSLKVIADHIRACAFLITDGVIPGNEGRGYVLRRILRRAIRHGYRLGQKQPFFYLLVDDLVDVMGPAYPELTRARKHVAGVIRQEEERFAETLENGMEVLEAALSHGNETLSGEIVFRLYDTFGFPVDLTADIARERGIVIDMAGFETCMAQQRDRARASGKFTMQTGLEYTGQPTEFHGYATLQHEAQILALYKQGSRVDFIEADDEAVVVLDQTPFYAESGGQAGDSGELLSGSGTFTVNDTQKIQAGVFGHNGMLSSGRMAIGDRVIARVDQIARTNTAYNHSATHLLHAALRQVLGNHVTQKGSLVDASRLRFDFSHNSAMQENEIRQVENLVNAQIRKNHEVATQLMTYDDAVKQGAMALFGEKYGDTVRVVAMGDFSTELCGGTHVSYSGDIGFFRIVAESGVAAGIRRIEALTGDAALAYTQQQEQQLQQVADALKAAPQEAAQKLSQILDNIRQMEKEIATLRSKLAGVQSTSLIEQAQEIKGIRVLATTLENVNVKTLRETLDNFKNRLKSCVVVLGTIEKDKVTLIAGVTDDLTVKLKAGDLINFVAQQVGGKGGGRADMAQAGGTLPEKLPQALASVPSWVEQNL</sequence>
<feature type="chain" id="PRO_0000075162" description="Alanine--tRNA ligase">
    <location>
        <begin position="1"/>
        <end position="863"/>
    </location>
</feature>
<feature type="binding site" evidence="1">
    <location>
        <position position="552"/>
    </location>
    <ligand>
        <name>Zn(2+)</name>
        <dbReference type="ChEBI" id="CHEBI:29105"/>
    </ligand>
</feature>
<feature type="binding site" evidence="1">
    <location>
        <position position="556"/>
    </location>
    <ligand>
        <name>Zn(2+)</name>
        <dbReference type="ChEBI" id="CHEBI:29105"/>
    </ligand>
</feature>
<feature type="binding site" evidence="1">
    <location>
        <position position="654"/>
    </location>
    <ligand>
        <name>Zn(2+)</name>
        <dbReference type="ChEBI" id="CHEBI:29105"/>
    </ligand>
</feature>
<feature type="binding site" evidence="1">
    <location>
        <position position="658"/>
    </location>
    <ligand>
        <name>Zn(2+)</name>
        <dbReference type="ChEBI" id="CHEBI:29105"/>
    </ligand>
</feature>
<evidence type="ECO:0000255" key="1">
    <source>
        <dbReference type="HAMAP-Rule" id="MF_00036"/>
    </source>
</evidence>
<accession>Q82TF8</accession>
<gene>
    <name evidence="1" type="primary">alaS</name>
    <name type="ordered locus">NE1930</name>
</gene>
<comment type="function">
    <text evidence="1">Catalyzes the attachment of alanine to tRNA(Ala) in a two-step reaction: alanine is first activated by ATP to form Ala-AMP and then transferred to the acceptor end of tRNA(Ala). Also edits incorrectly charged Ser-tRNA(Ala) and Gly-tRNA(Ala) via its editing domain.</text>
</comment>
<comment type="catalytic activity">
    <reaction evidence="1">
        <text>tRNA(Ala) + L-alanine + ATP = L-alanyl-tRNA(Ala) + AMP + diphosphate</text>
        <dbReference type="Rhea" id="RHEA:12540"/>
        <dbReference type="Rhea" id="RHEA-COMP:9657"/>
        <dbReference type="Rhea" id="RHEA-COMP:9923"/>
        <dbReference type="ChEBI" id="CHEBI:30616"/>
        <dbReference type="ChEBI" id="CHEBI:33019"/>
        <dbReference type="ChEBI" id="CHEBI:57972"/>
        <dbReference type="ChEBI" id="CHEBI:78442"/>
        <dbReference type="ChEBI" id="CHEBI:78497"/>
        <dbReference type="ChEBI" id="CHEBI:456215"/>
        <dbReference type="EC" id="6.1.1.7"/>
    </reaction>
</comment>
<comment type="cofactor">
    <cofactor evidence="1">
        <name>Zn(2+)</name>
        <dbReference type="ChEBI" id="CHEBI:29105"/>
    </cofactor>
    <text evidence="1">Binds 1 zinc ion per subunit.</text>
</comment>
<comment type="subcellular location">
    <subcellularLocation>
        <location evidence="1">Cytoplasm</location>
    </subcellularLocation>
</comment>
<comment type="domain">
    <text evidence="1">Consists of three domains; the N-terminal catalytic domain, the editing domain and the C-terminal C-Ala domain. The editing domain removes incorrectly charged amino acids, while the C-Ala domain, along with tRNA(Ala), serves as a bridge to cooperatively bring together the editing and aminoacylation centers thus stimulating deacylation of misacylated tRNAs.</text>
</comment>
<comment type="similarity">
    <text evidence="1">Belongs to the class-II aminoacyl-tRNA synthetase family.</text>
</comment>
<keyword id="KW-0030">Aminoacyl-tRNA synthetase</keyword>
<keyword id="KW-0067">ATP-binding</keyword>
<keyword id="KW-0963">Cytoplasm</keyword>
<keyword id="KW-0436">Ligase</keyword>
<keyword id="KW-0479">Metal-binding</keyword>
<keyword id="KW-0547">Nucleotide-binding</keyword>
<keyword id="KW-0648">Protein biosynthesis</keyword>
<keyword id="KW-1185">Reference proteome</keyword>
<keyword id="KW-0694">RNA-binding</keyword>
<keyword id="KW-0820">tRNA-binding</keyword>
<keyword id="KW-0862">Zinc</keyword>
<protein>
    <recommendedName>
        <fullName evidence="1">Alanine--tRNA ligase</fullName>
        <ecNumber evidence="1">6.1.1.7</ecNumber>
    </recommendedName>
    <alternativeName>
        <fullName evidence="1">Alanyl-tRNA synthetase</fullName>
        <shortName evidence="1">AlaRS</shortName>
    </alternativeName>
</protein>
<dbReference type="EC" id="6.1.1.7" evidence="1"/>
<dbReference type="EMBL" id="AL954747">
    <property type="protein sequence ID" value="CAD85841.1"/>
    <property type="molecule type" value="Genomic_DNA"/>
</dbReference>
<dbReference type="RefSeq" id="WP_011112466.1">
    <property type="nucleotide sequence ID" value="NC_004757.1"/>
</dbReference>
<dbReference type="SMR" id="Q82TF8"/>
<dbReference type="STRING" id="228410.NE1930"/>
<dbReference type="GeneID" id="87105089"/>
<dbReference type="KEGG" id="neu:NE1930"/>
<dbReference type="eggNOG" id="COG0013">
    <property type="taxonomic scope" value="Bacteria"/>
</dbReference>
<dbReference type="HOGENOM" id="CLU_004485_1_1_4"/>
<dbReference type="OrthoDB" id="9803884at2"/>
<dbReference type="PhylomeDB" id="Q82TF8"/>
<dbReference type="Proteomes" id="UP000001416">
    <property type="component" value="Chromosome"/>
</dbReference>
<dbReference type="GO" id="GO:0005829">
    <property type="term" value="C:cytosol"/>
    <property type="evidence" value="ECO:0007669"/>
    <property type="project" value="TreeGrafter"/>
</dbReference>
<dbReference type="GO" id="GO:0004813">
    <property type="term" value="F:alanine-tRNA ligase activity"/>
    <property type="evidence" value="ECO:0007669"/>
    <property type="project" value="UniProtKB-UniRule"/>
</dbReference>
<dbReference type="GO" id="GO:0002161">
    <property type="term" value="F:aminoacyl-tRNA deacylase activity"/>
    <property type="evidence" value="ECO:0007669"/>
    <property type="project" value="TreeGrafter"/>
</dbReference>
<dbReference type="GO" id="GO:0005524">
    <property type="term" value="F:ATP binding"/>
    <property type="evidence" value="ECO:0007669"/>
    <property type="project" value="UniProtKB-UniRule"/>
</dbReference>
<dbReference type="GO" id="GO:0000049">
    <property type="term" value="F:tRNA binding"/>
    <property type="evidence" value="ECO:0007669"/>
    <property type="project" value="UniProtKB-KW"/>
</dbReference>
<dbReference type="GO" id="GO:0008270">
    <property type="term" value="F:zinc ion binding"/>
    <property type="evidence" value="ECO:0007669"/>
    <property type="project" value="UniProtKB-UniRule"/>
</dbReference>
<dbReference type="GO" id="GO:0006419">
    <property type="term" value="P:alanyl-tRNA aminoacylation"/>
    <property type="evidence" value="ECO:0007669"/>
    <property type="project" value="UniProtKB-UniRule"/>
</dbReference>
<dbReference type="GO" id="GO:0045892">
    <property type="term" value="P:negative regulation of DNA-templated transcription"/>
    <property type="evidence" value="ECO:0007669"/>
    <property type="project" value="TreeGrafter"/>
</dbReference>
<dbReference type="CDD" id="cd00673">
    <property type="entry name" value="AlaRS_core"/>
    <property type="match status" value="1"/>
</dbReference>
<dbReference type="FunFam" id="2.40.30.130:FF:000001">
    <property type="entry name" value="Alanine--tRNA ligase"/>
    <property type="match status" value="1"/>
</dbReference>
<dbReference type="FunFam" id="3.10.310.40:FF:000001">
    <property type="entry name" value="Alanine--tRNA ligase"/>
    <property type="match status" value="1"/>
</dbReference>
<dbReference type="FunFam" id="3.30.54.20:FF:000001">
    <property type="entry name" value="Alanine--tRNA ligase"/>
    <property type="match status" value="1"/>
</dbReference>
<dbReference type="FunFam" id="3.30.930.10:FF:000004">
    <property type="entry name" value="Alanine--tRNA ligase"/>
    <property type="match status" value="1"/>
</dbReference>
<dbReference type="FunFam" id="3.30.980.10:FF:000004">
    <property type="entry name" value="Alanine--tRNA ligase, cytoplasmic"/>
    <property type="match status" value="1"/>
</dbReference>
<dbReference type="Gene3D" id="2.40.30.130">
    <property type="match status" value="1"/>
</dbReference>
<dbReference type="Gene3D" id="3.10.310.40">
    <property type="match status" value="1"/>
</dbReference>
<dbReference type="Gene3D" id="3.30.54.20">
    <property type="match status" value="1"/>
</dbReference>
<dbReference type="Gene3D" id="6.10.250.550">
    <property type="match status" value="1"/>
</dbReference>
<dbReference type="Gene3D" id="3.30.930.10">
    <property type="entry name" value="Bira Bifunctional Protein, Domain 2"/>
    <property type="match status" value="1"/>
</dbReference>
<dbReference type="Gene3D" id="3.30.980.10">
    <property type="entry name" value="Threonyl-trna Synthetase, Chain A, domain 2"/>
    <property type="match status" value="1"/>
</dbReference>
<dbReference type="HAMAP" id="MF_00036_B">
    <property type="entry name" value="Ala_tRNA_synth_B"/>
    <property type="match status" value="1"/>
</dbReference>
<dbReference type="InterPro" id="IPR045864">
    <property type="entry name" value="aa-tRNA-synth_II/BPL/LPL"/>
</dbReference>
<dbReference type="InterPro" id="IPR002318">
    <property type="entry name" value="Ala-tRNA-lgiase_IIc"/>
</dbReference>
<dbReference type="InterPro" id="IPR018162">
    <property type="entry name" value="Ala-tRNA-ligase_IIc_anticod-bd"/>
</dbReference>
<dbReference type="InterPro" id="IPR018165">
    <property type="entry name" value="Ala-tRNA-synth_IIc_core"/>
</dbReference>
<dbReference type="InterPro" id="IPR018164">
    <property type="entry name" value="Ala-tRNA-synth_IIc_N"/>
</dbReference>
<dbReference type="InterPro" id="IPR050058">
    <property type="entry name" value="Ala-tRNA_ligase"/>
</dbReference>
<dbReference type="InterPro" id="IPR023033">
    <property type="entry name" value="Ala_tRNA_ligase_euk/bac"/>
</dbReference>
<dbReference type="InterPro" id="IPR003156">
    <property type="entry name" value="DHHA1_dom"/>
</dbReference>
<dbReference type="InterPro" id="IPR018163">
    <property type="entry name" value="Thr/Ala-tRNA-synth_IIc_edit"/>
</dbReference>
<dbReference type="InterPro" id="IPR009000">
    <property type="entry name" value="Transl_B-barrel_sf"/>
</dbReference>
<dbReference type="InterPro" id="IPR012947">
    <property type="entry name" value="tRNA_SAD"/>
</dbReference>
<dbReference type="NCBIfam" id="TIGR00344">
    <property type="entry name" value="alaS"/>
    <property type="match status" value="1"/>
</dbReference>
<dbReference type="PANTHER" id="PTHR11777:SF9">
    <property type="entry name" value="ALANINE--TRNA LIGASE, CYTOPLASMIC"/>
    <property type="match status" value="1"/>
</dbReference>
<dbReference type="PANTHER" id="PTHR11777">
    <property type="entry name" value="ALANYL-TRNA SYNTHETASE"/>
    <property type="match status" value="1"/>
</dbReference>
<dbReference type="Pfam" id="PF02272">
    <property type="entry name" value="DHHA1"/>
    <property type="match status" value="1"/>
</dbReference>
<dbReference type="Pfam" id="PF01411">
    <property type="entry name" value="tRNA-synt_2c"/>
    <property type="match status" value="1"/>
</dbReference>
<dbReference type="Pfam" id="PF07973">
    <property type="entry name" value="tRNA_SAD"/>
    <property type="match status" value="1"/>
</dbReference>
<dbReference type="PRINTS" id="PR00980">
    <property type="entry name" value="TRNASYNTHALA"/>
</dbReference>
<dbReference type="SMART" id="SM00863">
    <property type="entry name" value="tRNA_SAD"/>
    <property type="match status" value="1"/>
</dbReference>
<dbReference type="SUPFAM" id="SSF55681">
    <property type="entry name" value="Class II aaRS and biotin synthetases"/>
    <property type="match status" value="1"/>
</dbReference>
<dbReference type="SUPFAM" id="SSF101353">
    <property type="entry name" value="Putative anticodon-binding domain of alanyl-tRNA synthetase (AlaRS)"/>
    <property type="match status" value="1"/>
</dbReference>
<dbReference type="SUPFAM" id="SSF55186">
    <property type="entry name" value="ThrRS/AlaRS common domain"/>
    <property type="match status" value="1"/>
</dbReference>
<dbReference type="SUPFAM" id="SSF50447">
    <property type="entry name" value="Translation proteins"/>
    <property type="match status" value="1"/>
</dbReference>
<dbReference type="PROSITE" id="PS50860">
    <property type="entry name" value="AA_TRNA_LIGASE_II_ALA"/>
    <property type="match status" value="1"/>
</dbReference>
<reference key="1">
    <citation type="journal article" date="2003" name="J. Bacteriol.">
        <title>Complete genome sequence of the ammonia-oxidizing bacterium and obligate chemolithoautotroph Nitrosomonas europaea.</title>
        <authorList>
            <person name="Chain P."/>
            <person name="Lamerdin J.E."/>
            <person name="Larimer F.W."/>
            <person name="Regala W."/>
            <person name="Lao V."/>
            <person name="Land M.L."/>
            <person name="Hauser L."/>
            <person name="Hooper A.B."/>
            <person name="Klotz M.G."/>
            <person name="Norton J."/>
            <person name="Sayavedra-Soto L.A."/>
            <person name="Arciero D.M."/>
            <person name="Hommes N.G."/>
            <person name="Whittaker M.M."/>
            <person name="Arp D.J."/>
        </authorList>
    </citation>
    <scope>NUCLEOTIDE SEQUENCE [LARGE SCALE GENOMIC DNA]</scope>
    <source>
        <strain>ATCC 19718 / CIP 103999 / KCTC 2705 / NBRC 14298</strain>
    </source>
</reference>
<name>SYA_NITEU</name>